<proteinExistence type="evidence at transcript level"/>
<accession>O80998</accession>
<evidence type="ECO:0000250" key="1">
    <source>
        <dbReference type="UniProtKB" id="Q9FGC5"/>
    </source>
</evidence>
<evidence type="ECO:0000255" key="2">
    <source>
        <dbReference type="PROSITE-ProRule" id="PRU01088"/>
    </source>
</evidence>
<evidence type="ECO:0000256" key="3">
    <source>
        <dbReference type="SAM" id="MobiDB-lite"/>
    </source>
</evidence>
<evidence type="ECO:0000305" key="4"/>
<feature type="initiator methionine" description="Removed" evidence="1">
    <location>
        <position position="1"/>
    </location>
</feature>
<feature type="chain" id="PRO_0000072792" description="Jacalin-related lectin 20">
    <location>
        <begin position="2"/>
        <end position="449"/>
    </location>
</feature>
<feature type="domain" description="Jacalin-type lectin 1" evidence="2">
    <location>
        <begin position="2"/>
        <end position="144"/>
    </location>
</feature>
<feature type="domain" description="Jacalin-type lectin 2" evidence="2">
    <location>
        <begin position="147"/>
        <end position="294"/>
    </location>
</feature>
<feature type="domain" description="Jacalin-type lectin 3" evidence="2">
    <location>
        <begin position="303"/>
        <end position="446"/>
    </location>
</feature>
<feature type="region of interest" description="Disordered" evidence="3">
    <location>
        <begin position="1"/>
        <end position="20"/>
    </location>
</feature>
<feature type="region of interest" description="Disordered" evidence="3">
    <location>
        <begin position="294"/>
        <end position="314"/>
    </location>
</feature>
<feature type="modified residue" description="N-acetylalanine" evidence="1">
    <location>
        <position position="2"/>
    </location>
</feature>
<comment type="similarity">
    <text evidence="2 4">Belongs to the jacalin lectin family.</text>
</comment>
<name>JAL20_ARATH</name>
<gene>
    <name type="primary">JAL20</name>
    <name type="ordered locus">At2g25980</name>
    <name type="ORF">T19L18.21</name>
</gene>
<dbReference type="EMBL" id="AC004747">
    <property type="protein sequence ID" value="AAC31237.1"/>
    <property type="molecule type" value="Genomic_DNA"/>
</dbReference>
<dbReference type="EMBL" id="CP002685">
    <property type="protein sequence ID" value="AEC07779.1"/>
    <property type="molecule type" value="Genomic_DNA"/>
</dbReference>
<dbReference type="EMBL" id="AY078966">
    <property type="protein sequence ID" value="AAL84963.1"/>
    <property type="molecule type" value="mRNA"/>
</dbReference>
<dbReference type="EMBL" id="AY133579">
    <property type="protein sequence ID" value="AAM91409.1"/>
    <property type="molecule type" value="mRNA"/>
</dbReference>
<dbReference type="PIR" id="T02625">
    <property type="entry name" value="T02625"/>
</dbReference>
<dbReference type="RefSeq" id="NP_180168.1">
    <property type="nucleotide sequence ID" value="NM_128157.4"/>
</dbReference>
<dbReference type="SMR" id="O80998"/>
<dbReference type="BioGRID" id="2491">
    <property type="interactions" value="8"/>
</dbReference>
<dbReference type="FunCoup" id="O80998">
    <property type="interactions" value="114"/>
</dbReference>
<dbReference type="IntAct" id="O80998">
    <property type="interactions" value="5"/>
</dbReference>
<dbReference type="STRING" id="3702.O80998"/>
<dbReference type="MetOSite" id="O80998"/>
<dbReference type="PaxDb" id="3702-AT2G25980.1"/>
<dbReference type="ProteomicsDB" id="232287"/>
<dbReference type="EnsemblPlants" id="AT2G25980.1">
    <property type="protein sequence ID" value="AT2G25980.1"/>
    <property type="gene ID" value="AT2G25980"/>
</dbReference>
<dbReference type="GeneID" id="817139"/>
<dbReference type="Gramene" id="AT2G25980.1">
    <property type="protein sequence ID" value="AT2G25980.1"/>
    <property type="gene ID" value="AT2G25980"/>
</dbReference>
<dbReference type="KEGG" id="ath:AT2G25980"/>
<dbReference type="Araport" id="AT2G25980"/>
<dbReference type="TAIR" id="AT2G25980"/>
<dbReference type="HOGENOM" id="CLU_041730_0_0_1"/>
<dbReference type="InParanoid" id="O80998"/>
<dbReference type="OMA" id="GADHENV"/>
<dbReference type="OrthoDB" id="581739at2759"/>
<dbReference type="PhylomeDB" id="O80998"/>
<dbReference type="PRO" id="PR:O80998"/>
<dbReference type="Proteomes" id="UP000006548">
    <property type="component" value="Chromosome 2"/>
</dbReference>
<dbReference type="ExpressionAtlas" id="O80998">
    <property type="expression patterns" value="baseline and differential"/>
</dbReference>
<dbReference type="GO" id="GO:0009506">
    <property type="term" value="C:plasmodesma"/>
    <property type="evidence" value="ECO:0007005"/>
    <property type="project" value="TAIR"/>
</dbReference>
<dbReference type="GO" id="GO:0030246">
    <property type="term" value="F:carbohydrate binding"/>
    <property type="evidence" value="ECO:0007669"/>
    <property type="project" value="UniProtKB-KW"/>
</dbReference>
<dbReference type="CDD" id="cd09612">
    <property type="entry name" value="Jacalin"/>
    <property type="match status" value="3"/>
</dbReference>
<dbReference type="FunFam" id="2.100.10.30:FF:000001">
    <property type="entry name" value="Jacalin-related lectin 33"/>
    <property type="match status" value="3"/>
</dbReference>
<dbReference type="Gene3D" id="2.100.10.30">
    <property type="entry name" value="Jacalin-like lectin domain"/>
    <property type="match status" value="3"/>
</dbReference>
<dbReference type="InterPro" id="IPR001229">
    <property type="entry name" value="Jacalin-like_lectin_dom"/>
</dbReference>
<dbReference type="InterPro" id="IPR033734">
    <property type="entry name" value="Jacalin-like_lectin_dom_plant"/>
</dbReference>
<dbReference type="InterPro" id="IPR036404">
    <property type="entry name" value="Jacalin-like_lectin_dom_sf"/>
</dbReference>
<dbReference type="PANTHER" id="PTHR47293:SF66">
    <property type="entry name" value="JACALIN-RELATED LECTIN 11-RELATED"/>
    <property type="match status" value="1"/>
</dbReference>
<dbReference type="PANTHER" id="PTHR47293">
    <property type="entry name" value="JACALIN-RELATED LECTIN 3"/>
    <property type="match status" value="1"/>
</dbReference>
<dbReference type="Pfam" id="PF01419">
    <property type="entry name" value="Jacalin"/>
    <property type="match status" value="3"/>
</dbReference>
<dbReference type="SMART" id="SM00915">
    <property type="entry name" value="Jacalin"/>
    <property type="match status" value="3"/>
</dbReference>
<dbReference type="SUPFAM" id="SSF51101">
    <property type="entry name" value="Mannose-binding lectins"/>
    <property type="match status" value="3"/>
</dbReference>
<dbReference type="PROSITE" id="PS51752">
    <property type="entry name" value="JACALIN_LECTIN"/>
    <property type="match status" value="3"/>
</dbReference>
<sequence>MAQRLEAKGGKGGNQWDDGADHENVTKIHVRGGLEGIQFIKFEYVKAGQTVVGPIHGVSGKGFTQTFEINHLNGEHVVSVKGCYDNISGVIQALQFETNQRSSEVMGYDDTGTKFTLEISGNKITGFHGSADANLKSLGAYFTPPPPIKQEYQGGTGGSPWDHGIYTGIRKVYVTFSPVSISHIKVDYDKDGKVETRQDGDMLGENRVQGQPNEFVVDYPYEYITSIEVTCDKVSGNTNRVRSLSFKTSKDRTSPTYGRKSERTFVFESKGRALVGLHGRCCWAIDALGAHFGAPPIPPPPPTEKLQGSGGDGGESWDDGAFDGVRKIYVGQGENGIASVKFVYDKNNQLVLGEEHGKHTLLGYEEFELDYPSEYITAVEGYYDKVFGSESSVIVMLKFKTNKRTSPPYGMDAGVSFILGKEGHKVVGFHGKASPELYQIGVTVAPITK</sequence>
<reference key="1">
    <citation type="journal article" date="1999" name="Nature">
        <title>Sequence and analysis of chromosome 2 of the plant Arabidopsis thaliana.</title>
        <authorList>
            <person name="Lin X."/>
            <person name="Kaul S."/>
            <person name="Rounsley S.D."/>
            <person name="Shea T.P."/>
            <person name="Benito M.-I."/>
            <person name="Town C.D."/>
            <person name="Fujii C.Y."/>
            <person name="Mason T.M."/>
            <person name="Bowman C.L."/>
            <person name="Barnstead M.E."/>
            <person name="Feldblyum T.V."/>
            <person name="Buell C.R."/>
            <person name="Ketchum K.A."/>
            <person name="Lee J.J."/>
            <person name="Ronning C.M."/>
            <person name="Koo H.L."/>
            <person name="Moffat K.S."/>
            <person name="Cronin L.A."/>
            <person name="Shen M."/>
            <person name="Pai G."/>
            <person name="Van Aken S."/>
            <person name="Umayam L."/>
            <person name="Tallon L.J."/>
            <person name="Gill J.E."/>
            <person name="Adams M.D."/>
            <person name="Carrera A.J."/>
            <person name="Creasy T.H."/>
            <person name="Goodman H.M."/>
            <person name="Somerville C.R."/>
            <person name="Copenhaver G.P."/>
            <person name="Preuss D."/>
            <person name="Nierman W.C."/>
            <person name="White O."/>
            <person name="Eisen J.A."/>
            <person name="Salzberg S.L."/>
            <person name="Fraser C.M."/>
            <person name="Venter J.C."/>
        </authorList>
    </citation>
    <scope>NUCLEOTIDE SEQUENCE [LARGE SCALE GENOMIC DNA]</scope>
    <source>
        <strain>cv. Columbia</strain>
    </source>
</reference>
<reference key="2">
    <citation type="journal article" date="2017" name="Plant J.">
        <title>Araport11: a complete reannotation of the Arabidopsis thaliana reference genome.</title>
        <authorList>
            <person name="Cheng C.Y."/>
            <person name="Krishnakumar V."/>
            <person name="Chan A.P."/>
            <person name="Thibaud-Nissen F."/>
            <person name="Schobel S."/>
            <person name="Town C.D."/>
        </authorList>
    </citation>
    <scope>GENOME REANNOTATION</scope>
    <source>
        <strain>cv. Columbia</strain>
    </source>
</reference>
<reference key="3">
    <citation type="journal article" date="2003" name="Science">
        <title>Empirical analysis of transcriptional activity in the Arabidopsis genome.</title>
        <authorList>
            <person name="Yamada K."/>
            <person name="Lim J."/>
            <person name="Dale J.M."/>
            <person name="Chen H."/>
            <person name="Shinn P."/>
            <person name="Palm C.J."/>
            <person name="Southwick A.M."/>
            <person name="Wu H.C."/>
            <person name="Kim C.J."/>
            <person name="Nguyen M."/>
            <person name="Pham P.K."/>
            <person name="Cheuk R.F."/>
            <person name="Karlin-Newmann G."/>
            <person name="Liu S.X."/>
            <person name="Lam B."/>
            <person name="Sakano H."/>
            <person name="Wu T."/>
            <person name="Yu G."/>
            <person name="Miranda M."/>
            <person name="Quach H.L."/>
            <person name="Tripp M."/>
            <person name="Chang C.H."/>
            <person name="Lee J.M."/>
            <person name="Toriumi M.J."/>
            <person name="Chan M.M."/>
            <person name="Tang C.C."/>
            <person name="Onodera C.S."/>
            <person name="Deng J.M."/>
            <person name="Akiyama K."/>
            <person name="Ansari Y."/>
            <person name="Arakawa T."/>
            <person name="Banh J."/>
            <person name="Banno F."/>
            <person name="Bowser L."/>
            <person name="Brooks S.Y."/>
            <person name="Carninci P."/>
            <person name="Chao Q."/>
            <person name="Choy N."/>
            <person name="Enju A."/>
            <person name="Goldsmith A.D."/>
            <person name="Gurjal M."/>
            <person name="Hansen N.F."/>
            <person name="Hayashizaki Y."/>
            <person name="Johnson-Hopson C."/>
            <person name="Hsuan V.W."/>
            <person name="Iida K."/>
            <person name="Karnes M."/>
            <person name="Khan S."/>
            <person name="Koesema E."/>
            <person name="Ishida J."/>
            <person name="Jiang P.X."/>
            <person name="Jones T."/>
            <person name="Kawai J."/>
            <person name="Kamiya A."/>
            <person name="Meyers C."/>
            <person name="Nakajima M."/>
            <person name="Narusaka M."/>
            <person name="Seki M."/>
            <person name="Sakurai T."/>
            <person name="Satou M."/>
            <person name="Tamse R."/>
            <person name="Vaysberg M."/>
            <person name="Wallender E.K."/>
            <person name="Wong C."/>
            <person name="Yamamura Y."/>
            <person name="Yuan S."/>
            <person name="Shinozaki K."/>
            <person name="Davis R.W."/>
            <person name="Theologis A."/>
            <person name="Ecker J.R."/>
        </authorList>
    </citation>
    <scope>NUCLEOTIDE SEQUENCE [LARGE SCALE MRNA]</scope>
    <source>
        <strain>cv. Columbia</strain>
    </source>
</reference>
<reference key="4">
    <citation type="journal article" date="2008" name="Plant Cell Physiol.">
        <title>Antagonistic jacalin-related lectins regulate the size of ER body-type beta-glucosidase complexes in Arabidopsis thaliana.</title>
        <authorList>
            <person name="Nagano A.J."/>
            <person name="Fukao Y."/>
            <person name="Fujiwara M."/>
            <person name="Nishimura M."/>
            <person name="Hara-Nishimura I."/>
        </authorList>
    </citation>
    <scope>GENE FAMILY</scope>
    <scope>NOMENCLATURE</scope>
</reference>
<protein>
    <recommendedName>
        <fullName>Jacalin-related lectin 20</fullName>
    </recommendedName>
    <alternativeName>
        <fullName>Myrosinase-binding protein-like At2g25980</fullName>
    </alternativeName>
</protein>
<organism>
    <name type="scientific">Arabidopsis thaliana</name>
    <name type="common">Mouse-ear cress</name>
    <dbReference type="NCBI Taxonomy" id="3702"/>
    <lineage>
        <taxon>Eukaryota</taxon>
        <taxon>Viridiplantae</taxon>
        <taxon>Streptophyta</taxon>
        <taxon>Embryophyta</taxon>
        <taxon>Tracheophyta</taxon>
        <taxon>Spermatophyta</taxon>
        <taxon>Magnoliopsida</taxon>
        <taxon>eudicotyledons</taxon>
        <taxon>Gunneridae</taxon>
        <taxon>Pentapetalae</taxon>
        <taxon>rosids</taxon>
        <taxon>malvids</taxon>
        <taxon>Brassicales</taxon>
        <taxon>Brassicaceae</taxon>
        <taxon>Camelineae</taxon>
        <taxon>Arabidopsis</taxon>
    </lineage>
</organism>
<keyword id="KW-0007">Acetylation</keyword>
<keyword id="KW-0430">Lectin</keyword>
<keyword id="KW-1185">Reference proteome</keyword>
<keyword id="KW-0677">Repeat</keyword>